<evidence type="ECO:0000255" key="1">
    <source>
        <dbReference type="HAMAP-Rule" id="MF_00599"/>
    </source>
</evidence>
<feature type="chain" id="PRO_1000129939" description="Cell division protein FtsB">
    <location>
        <begin position="1"/>
        <end position="103"/>
    </location>
</feature>
<feature type="topological domain" description="Cytoplasmic" evidence="1">
    <location>
        <begin position="1"/>
        <end position="3"/>
    </location>
</feature>
<feature type="transmembrane region" description="Helical" evidence="1">
    <location>
        <begin position="4"/>
        <end position="21"/>
    </location>
</feature>
<feature type="topological domain" description="Periplasmic" evidence="1">
    <location>
        <begin position="22"/>
        <end position="103"/>
    </location>
</feature>
<feature type="coiled-coil region" evidence="1">
    <location>
        <begin position="33"/>
        <end position="62"/>
    </location>
</feature>
<proteinExistence type="inferred from homology"/>
<protein>
    <recommendedName>
        <fullName evidence="1">Cell division protein FtsB</fullName>
    </recommendedName>
</protein>
<dbReference type="EMBL" id="AM933172">
    <property type="protein sequence ID" value="CAR34349.1"/>
    <property type="molecule type" value="Genomic_DNA"/>
</dbReference>
<dbReference type="RefSeq" id="WP_000517480.1">
    <property type="nucleotide sequence ID" value="NC_011294.1"/>
</dbReference>
<dbReference type="SMR" id="B5QW19"/>
<dbReference type="KEGG" id="set:SEN2770"/>
<dbReference type="HOGENOM" id="CLU_134863_5_2_6"/>
<dbReference type="Proteomes" id="UP000000613">
    <property type="component" value="Chromosome"/>
</dbReference>
<dbReference type="GO" id="GO:0032153">
    <property type="term" value="C:cell division site"/>
    <property type="evidence" value="ECO:0007669"/>
    <property type="project" value="UniProtKB-UniRule"/>
</dbReference>
<dbReference type="GO" id="GO:0030428">
    <property type="term" value="C:cell septum"/>
    <property type="evidence" value="ECO:0007669"/>
    <property type="project" value="TreeGrafter"/>
</dbReference>
<dbReference type="GO" id="GO:0005886">
    <property type="term" value="C:plasma membrane"/>
    <property type="evidence" value="ECO:0007669"/>
    <property type="project" value="UniProtKB-SubCell"/>
</dbReference>
<dbReference type="GO" id="GO:0043093">
    <property type="term" value="P:FtsZ-dependent cytokinesis"/>
    <property type="evidence" value="ECO:0007669"/>
    <property type="project" value="UniProtKB-UniRule"/>
</dbReference>
<dbReference type="FunFam" id="1.20.5.400:FF:000001">
    <property type="entry name" value="Cell division protein FtsB"/>
    <property type="match status" value="1"/>
</dbReference>
<dbReference type="Gene3D" id="1.20.5.400">
    <property type="match status" value="1"/>
</dbReference>
<dbReference type="HAMAP" id="MF_00599">
    <property type="entry name" value="FtsB"/>
    <property type="match status" value="1"/>
</dbReference>
<dbReference type="InterPro" id="IPR023081">
    <property type="entry name" value="Cell_div_FtsB"/>
</dbReference>
<dbReference type="InterPro" id="IPR007060">
    <property type="entry name" value="FtsL/DivIC"/>
</dbReference>
<dbReference type="NCBIfam" id="NF002058">
    <property type="entry name" value="PRK00888.1"/>
    <property type="match status" value="1"/>
</dbReference>
<dbReference type="PANTHER" id="PTHR37485">
    <property type="entry name" value="CELL DIVISION PROTEIN FTSB"/>
    <property type="match status" value="1"/>
</dbReference>
<dbReference type="PANTHER" id="PTHR37485:SF1">
    <property type="entry name" value="CELL DIVISION PROTEIN FTSB"/>
    <property type="match status" value="1"/>
</dbReference>
<dbReference type="Pfam" id="PF04977">
    <property type="entry name" value="DivIC"/>
    <property type="match status" value="1"/>
</dbReference>
<organism>
    <name type="scientific">Salmonella enteritidis PT4 (strain P125109)</name>
    <dbReference type="NCBI Taxonomy" id="550537"/>
    <lineage>
        <taxon>Bacteria</taxon>
        <taxon>Pseudomonadati</taxon>
        <taxon>Pseudomonadota</taxon>
        <taxon>Gammaproteobacteria</taxon>
        <taxon>Enterobacterales</taxon>
        <taxon>Enterobacteriaceae</taxon>
        <taxon>Salmonella</taxon>
    </lineage>
</organism>
<gene>
    <name evidence="1" type="primary">ftsB</name>
    <name type="ordered locus">SEN2770</name>
</gene>
<accession>B5QW19</accession>
<reference key="1">
    <citation type="journal article" date="2008" name="Genome Res.">
        <title>Comparative genome analysis of Salmonella enteritidis PT4 and Salmonella gallinarum 287/91 provides insights into evolutionary and host adaptation pathways.</title>
        <authorList>
            <person name="Thomson N.R."/>
            <person name="Clayton D.J."/>
            <person name="Windhorst D."/>
            <person name="Vernikos G."/>
            <person name="Davidson S."/>
            <person name="Churcher C."/>
            <person name="Quail M.A."/>
            <person name="Stevens M."/>
            <person name="Jones M.A."/>
            <person name="Watson M."/>
            <person name="Barron A."/>
            <person name="Layton A."/>
            <person name="Pickard D."/>
            <person name="Kingsley R.A."/>
            <person name="Bignell A."/>
            <person name="Clark L."/>
            <person name="Harris B."/>
            <person name="Ormond D."/>
            <person name="Abdellah Z."/>
            <person name="Brooks K."/>
            <person name="Cherevach I."/>
            <person name="Chillingworth T."/>
            <person name="Woodward J."/>
            <person name="Norberczak H."/>
            <person name="Lord A."/>
            <person name="Arrowsmith C."/>
            <person name="Jagels K."/>
            <person name="Moule S."/>
            <person name="Mungall K."/>
            <person name="Saunders M."/>
            <person name="Whitehead S."/>
            <person name="Chabalgoity J.A."/>
            <person name="Maskell D."/>
            <person name="Humphreys T."/>
            <person name="Roberts M."/>
            <person name="Barrow P.A."/>
            <person name="Dougan G."/>
            <person name="Parkhill J."/>
        </authorList>
    </citation>
    <scope>NUCLEOTIDE SEQUENCE [LARGE SCALE GENOMIC DNA]</scope>
    <source>
        <strain>P125109</strain>
    </source>
</reference>
<comment type="function">
    <text evidence="1">Essential cell division protein. May link together the upstream cell division proteins, which are predominantly cytoplasmic, with the downstream cell division proteins, which are predominantly periplasmic.</text>
</comment>
<comment type="subunit">
    <text evidence="1">Part of a complex composed of FtsB, FtsL and FtsQ.</text>
</comment>
<comment type="subcellular location">
    <subcellularLocation>
        <location evidence="1">Cell inner membrane</location>
        <topology evidence="1">Single-pass type II membrane protein</topology>
    </subcellularLocation>
    <text evidence="1">Localizes to the division septum.</text>
</comment>
<comment type="similarity">
    <text evidence="1">Belongs to the FtsB family.</text>
</comment>
<name>FTSB_SALEP</name>
<sequence>MGKLTLLLLALLVWLQYSLWFGKNGIHDYSRVNDDVVAQQATNAKLKARNDQLFAEIDDLNGGQEAIEERARNELSMTKPGETFYRLVPDASKRAATAGQTHR</sequence>
<keyword id="KW-0131">Cell cycle</keyword>
<keyword id="KW-0132">Cell division</keyword>
<keyword id="KW-0997">Cell inner membrane</keyword>
<keyword id="KW-1003">Cell membrane</keyword>
<keyword id="KW-0175">Coiled coil</keyword>
<keyword id="KW-0472">Membrane</keyword>
<keyword id="KW-0812">Transmembrane</keyword>
<keyword id="KW-1133">Transmembrane helix</keyword>